<protein>
    <recommendedName>
        <fullName evidence="1">Glutamyl-tRNA(Gln) amidotransferase subunit A</fullName>
        <shortName evidence="1">Glu-ADT subunit A</shortName>
        <ecNumber evidence="1">6.3.5.7</ecNumber>
    </recommendedName>
</protein>
<gene>
    <name evidence="1" type="primary">gatA</name>
    <name type="ordered locus">MCA0098</name>
</gene>
<comment type="function">
    <text evidence="1">Allows the formation of correctly charged Gln-tRNA(Gln) through the transamidation of misacylated Glu-tRNA(Gln) in organisms which lack glutaminyl-tRNA synthetase. The reaction takes place in the presence of glutamine and ATP through an activated gamma-phospho-Glu-tRNA(Gln).</text>
</comment>
<comment type="catalytic activity">
    <reaction evidence="1">
        <text>L-glutamyl-tRNA(Gln) + L-glutamine + ATP + H2O = L-glutaminyl-tRNA(Gln) + L-glutamate + ADP + phosphate + H(+)</text>
        <dbReference type="Rhea" id="RHEA:17521"/>
        <dbReference type="Rhea" id="RHEA-COMP:9681"/>
        <dbReference type="Rhea" id="RHEA-COMP:9684"/>
        <dbReference type="ChEBI" id="CHEBI:15377"/>
        <dbReference type="ChEBI" id="CHEBI:15378"/>
        <dbReference type="ChEBI" id="CHEBI:29985"/>
        <dbReference type="ChEBI" id="CHEBI:30616"/>
        <dbReference type="ChEBI" id="CHEBI:43474"/>
        <dbReference type="ChEBI" id="CHEBI:58359"/>
        <dbReference type="ChEBI" id="CHEBI:78520"/>
        <dbReference type="ChEBI" id="CHEBI:78521"/>
        <dbReference type="ChEBI" id="CHEBI:456216"/>
        <dbReference type="EC" id="6.3.5.7"/>
    </reaction>
</comment>
<comment type="subunit">
    <text evidence="1">Heterotrimer of A, B and C subunits.</text>
</comment>
<comment type="similarity">
    <text evidence="1">Belongs to the amidase family. GatA subfamily.</text>
</comment>
<dbReference type="EC" id="6.3.5.7" evidence="1"/>
<dbReference type="EMBL" id="AE017282">
    <property type="protein sequence ID" value="AAU90722.1"/>
    <property type="molecule type" value="Genomic_DNA"/>
</dbReference>
<dbReference type="RefSeq" id="WP_010959468.1">
    <property type="nucleotide sequence ID" value="NC_002977.6"/>
</dbReference>
<dbReference type="SMR" id="Q60CK8"/>
<dbReference type="STRING" id="243233.MCA0098"/>
<dbReference type="GeneID" id="88222448"/>
<dbReference type="KEGG" id="mca:MCA0098"/>
<dbReference type="eggNOG" id="COG0154">
    <property type="taxonomic scope" value="Bacteria"/>
</dbReference>
<dbReference type="HOGENOM" id="CLU_009600_0_3_6"/>
<dbReference type="Proteomes" id="UP000006821">
    <property type="component" value="Chromosome"/>
</dbReference>
<dbReference type="GO" id="GO:0030956">
    <property type="term" value="C:glutamyl-tRNA(Gln) amidotransferase complex"/>
    <property type="evidence" value="ECO:0007669"/>
    <property type="project" value="InterPro"/>
</dbReference>
<dbReference type="GO" id="GO:0005524">
    <property type="term" value="F:ATP binding"/>
    <property type="evidence" value="ECO:0007669"/>
    <property type="project" value="UniProtKB-KW"/>
</dbReference>
<dbReference type="GO" id="GO:0050567">
    <property type="term" value="F:glutaminyl-tRNA synthase (glutamine-hydrolyzing) activity"/>
    <property type="evidence" value="ECO:0007669"/>
    <property type="project" value="UniProtKB-UniRule"/>
</dbReference>
<dbReference type="GO" id="GO:0006412">
    <property type="term" value="P:translation"/>
    <property type="evidence" value="ECO:0007669"/>
    <property type="project" value="UniProtKB-UniRule"/>
</dbReference>
<dbReference type="Gene3D" id="3.90.1300.10">
    <property type="entry name" value="Amidase signature (AS) domain"/>
    <property type="match status" value="1"/>
</dbReference>
<dbReference type="HAMAP" id="MF_00120">
    <property type="entry name" value="GatA"/>
    <property type="match status" value="1"/>
</dbReference>
<dbReference type="InterPro" id="IPR000120">
    <property type="entry name" value="Amidase"/>
</dbReference>
<dbReference type="InterPro" id="IPR020556">
    <property type="entry name" value="Amidase_CS"/>
</dbReference>
<dbReference type="InterPro" id="IPR023631">
    <property type="entry name" value="Amidase_dom"/>
</dbReference>
<dbReference type="InterPro" id="IPR036928">
    <property type="entry name" value="AS_sf"/>
</dbReference>
<dbReference type="InterPro" id="IPR004412">
    <property type="entry name" value="GatA"/>
</dbReference>
<dbReference type="NCBIfam" id="TIGR00132">
    <property type="entry name" value="gatA"/>
    <property type="match status" value="1"/>
</dbReference>
<dbReference type="PANTHER" id="PTHR11895:SF151">
    <property type="entry name" value="GLUTAMYL-TRNA(GLN) AMIDOTRANSFERASE SUBUNIT A"/>
    <property type="match status" value="1"/>
</dbReference>
<dbReference type="PANTHER" id="PTHR11895">
    <property type="entry name" value="TRANSAMIDASE"/>
    <property type="match status" value="1"/>
</dbReference>
<dbReference type="Pfam" id="PF01425">
    <property type="entry name" value="Amidase"/>
    <property type="match status" value="1"/>
</dbReference>
<dbReference type="SUPFAM" id="SSF75304">
    <property type="entry name" value="Amidase signature (AS) enzymes"/>
    <property type="match status" value="1"/>
</dbReference>
<dbReference type="PROSITE" id="PS00571">
    <property type="entry name" value="AMIDASES"/>
    <property type="match status" value="1"/>
</dbReference>
<reference key="1">
    <citation type="journal article" date="2004" name="PLoS Biol.">
        <title>Genomic insights into methanotrophy: the complete genome sequence of Methylococcus capsulatus (Bath).</title>
        <authorList>
            <person name="Ward N.L."/>
            <person name="Larsen O."/>
            <person name="Sakwa J."/>
            <person name="Bruseth L."/>
            <person name="Khouri H.M."/>
            <person name="Durkin A.S."/>
            <person name="Dimitrov G."/>
            <person name="Jiang L."/>
            <person name="Scanlan D."/>
            <person name="Kang K.H."/>
            <person name="Lewis M.R."/>
            <person name="Nelson K.E."/>
            <person name="Methe B.A."/>
            <person name="Wu M."/>
            <person name="Heidelberg J.F."/>
            <person name="Paulsen I.T."/>
            <person name="Fouts D.E."/>
            <person name="Ravel J."/>
            <person name="Tettelin H."/>
            <person name="Ren Q."/>
            <person name="Read T.D."/>
            <person name="DeBoy R.T."/>
            <person name="Seshadri R."/>
            <person name="Salzberg S.L."/>
            <person name="Jensen H.B."/>
            <person name="Birkeland N.K."/>
            <person name="Nelson W.C."/>
            <person name="Dodson R.J."/>
            <person name="Grindhaug S.H."/>
            <person name="Holt I.E."/>
            <person name="Eidhammer I."/>
            <person name="Jonasen I."/>
            <person name="Vanaken S."/>
            <person name="Utterback T.R."/>
            <person name="Feldblyum T.V."/>
            <person name="Fraser C.M."/>
            <person name="Lillehaug J.R."/>
            <person name="Eisen J.A."/>
        </authorList>
    </citation>
    <scope>NUCLEOTIDE SEQUENCE [LARGE SCALE GENOMIC DNA]</scope>
    <source>
        <strain>ATCC 33009 / NCIMB 11132 / Bath</strain>
    </source>
</reference>
<accession>Q60CK8</accession>
<evidence type="ECO:0000255" key="1">
    <source>
        <dbReference type="HAMAP-Rule" id="MF_00120"/>
    </source>
</evidence>
<feature type="chain" id="PRO_0000241117" description="Glutamyl-tRNA(Gln) amidotransferase subunit A">
    <location>
        <begin position="1"/>
        <end position="485"/>
    </location>
</feature>
<feature type="active site" description="Charge relay system" evidence="1">
    <location>
        <position position="76"/>
    </location>
</feature>
<feature type="active site" description="Charge relay system" evidence="1">
    <location>
        <position position="151"/>
    </location>
</feature>
<feature type="active site" description="Acyl-ester intermediate" evidence="1">
    <location>
        <position position="175"/>
    </location>
</feature>
<organism>
    <name type="scientific">Methylococcus capsulatus (strain ATCC 33009 / NCIMB 11132 / Bath)</name>
    <dbReference type="NCBI Taxonomy" id="243233"/>
    <lineage>
        <taxon>Bacteria</taxon>
        <taxon>Pseudomonadati</taxon>
        <taxon>Pseudomonadota</taxon>
        <taxon>Gammaproteobacteria</taxon>
        <taxon>Methylococcales</taxon>
        <taxon>Methylococcaceae</taxon>
        <taxon>Methylococcus</taxon>
    </lineage>
</organism>
<name>GATA_METCA</name>
<keyword id="KW-0067">ATP-binding</keyword>
<keyword id="KW-0436">Ligase</keyword>
<keyword id="KW-0547">Nucleotide-binding</keyword>
<keyword id="KW-0648">Protein biosynthesis</keyword>
<keyword id="KW-1185">Reference proteome</keyword>
<proteinExistence type="inferred from homology"/>
<sequence length="485" mass="52080">MHRKTLAELAAGLERREFSSVELTQAHLARIERLDPALNSFITTTPEIALAQARAADERLAKGEAGPLTGIPIAQKDIFCTKGVRTSCGSRMLDSFVSPYDACVVERFNAAGAVMLGKLNMDEFAMGSSNETSYYGPVKNPWNTATVPGGSSGGSAAAVAARLVPGATGTDTGGSIRQPAAFCGITGLKPTYGRVSRWGMIAFASSLDQAGPMARTAEDCAIMLQIMAGFDERDSTCVDRPVPDYRAALGNDLDGLRIGLPKEFFGEGLDPAIAGLIHAAVDEYRRLGAIVREISLPNMHLSVPAYYVVAPAECSSNLARFDGVRFGHRCENPTDLADLYTRSRGEGFGAEVKRRILIGTYALSAGYYDAYYLKAQKIRRLISEDFRRAFEEVDVIMGPTAPSVAFEFGAKSADPIAMYLSDIYTIAVNLAGLPGMSIPVGFSNGLPVGMQIIGGYFSEDRLLNVAHRYQQATDWHTRTPAGIAD</sequence>